<sequence>MLDENEDIHPLFAGAPATTEFKKLRKRIVRYTREAIEQYGMVERRADGSTPKWLVCLSGGKDSYTLLAVLYELKWRGLLPVDLLACNLDQGQPGFPSTVLPEFLDRMGVPNRIEYQDTYSVVVDKVPQGRTYCALCSRLRRGNLYRIAREEGCSAVVLGHHRDDILETFFMNLFHGGRLATMPPKLVNEEGDLFVFRPLAHVAEADCEKFARAMNYPIIPCDLCGSQDGLQRQQVKQILDGWEKNRPGRRQVMFRALMNARPSHLLDPKLFDFQGLELGSREKGENFGEIPLLR</sequence>
<evidence type="ECO:0000255" key="1">
    <source>
        <dbReference type="HAMAP-Rule" id="MF_01850"/>
    </source>
</evidence>
<protein>
    <recommendedName>
        <fullName evidence="1">tRNA-cytidine(32) 2-sulfurtransferase</fullName>
        <ecNumber evidence="1">2.8.1.-</ecNumber>
    </recommendedName>
    <alternativeName>
        <fullName evidence="1">Two-thiocytidine biosynthesis protein A</fullName>
    </alternativeName>
    <alternativeName>
        <fullName evidence="1">tRNA 2-thiocytidine biosynthesis protein TtcA</fullName>
    </alternativeName>
</protein>
<gene>
    <name evidence="1" type="primary">ttcA</name>
    <name type="ordered locus">SPO0534</name>
</gene>
<accession>Q5LW09</accession>
<organism>
    <name type="scientific">Ruegeria pomeroyi (strain ATCC 700808 / DSM 15171 / DSS-3)</name>
    <name type="common">Silicibacter pomeroyi</name>
    <dbReference type="NCBI Taxonomy" id="246200"/>
    <lineage>
        <taxon>Bacteria</taxon>
        <taxon>Pseudomonadati</taxon>
        <taxon>Pseudomonadota</taxon>
        <taxon>Alphaproteobacteria</taxon>
        <taxon>Rhodobacterales</taxon>
        <taxon>Roseobacteraceae</taxon>
        <taxon>Ruegeria</taxon>
    </lineage>
</organism>
<feature type="chain" id="PRO_0000348854" description="tRNA-cytidine(32) 2-sulfurtransferase">
    <location>
        <begin position="1"/>
        <end position="294"/>
    </location>
</feature>
<feature type="short sequence motif" description="PP-loop motif" evidence="1">
    <location>
        <begin position="58"/>
        <end position="63"/>
    </location>
</feature>
<feature type="binding site" evidence="1">
    <location>
        <position position="133"/>
    </location>
    <ligand>
        <name>[4Fe-4S] cluster</name>
        <dbReference type="ChEBI" id="CHEBI:49883"/>
    </ligand>
</feature>
<feature type="binding site" evidence="1">
    <location>
        <position position="136"/>
    </location>
    <ligand>
        <name>[4Fe-4S] cluster</name>
        <dbReference type="ChEBI" id="CHEBI:49883"/>
    </ligand>
</feature>
<feature type="binding site" evidence="1">
    <location>
        <position position="224"/>
    </location>
    <ligand>
        <name>[4Fe-4S] cluster</name>
        <dbReference type="ChEBI" id="CHEBI:49883"/>
    </ligand>
</feature>
<proteinExistence type="inferred from homology"/>
<keyword id="KW-0004">4Fe-4S</keyword>
<keyword id="KW-0067">ATP-binding</keyword>
<keyword id="KW-0963">Cytoplasm</keyword>
<keyword id="KW-0408">Iron</keyword>
<keyword id="KW-0411">Iron-sulfur</keyword>
<keyword id="KW-0460">Magnesium</keyword>
<keyword id="KW-0479">Metal-binding</keyword>
<keyword id="KW-0547">Nucleotide-binding</keyword>
<keyword id="KW-1185">Reference proteome</keyword>
<keyword id="KW-0694">RNA-binding</keyword>
<keyword id="KW-0808">Transferase</keyword>
<keyword id="KW-0819">tRNA processing</keyword>
<keyword id="KW-0820">tRNA-binding</keyword>
<reference key="1">
    <citation type="journal article" date="2004" name="Nature">
        <title>Genome sequence of Silicibacter pomeroyi reveals adaptations to the marine environment.</title>
        <authorList>
            <person name="Moran M.A."/>
            <person name="Buchan A."/>
            <person name="Gonzalez J.M."/>
            <person name="Heidelberg J.F."/>
            <person name="Whitman W.B."/>
            <person name="Kiene R.P."/>
            <person name="Henriksen J.R."/>
            <person name="King G.M."/>
            <person name="Belas R."/>
            <person name="Fuqua C."/>
            <person name="Brinkac L.M."/>
            <person name="Lewis M."/>
            <person name="Johri S."/>
            <person name="Weaver B."/>
            <person name="Pai G."/>
            <person name="Eisen J.A."/>
            <person name="Rahe E."/>
            <person name="Sheldon W.M."/>
            <person name="Ye W."/>
            <person name="Miller T.R."/>
            <person name="Carlton J."/>
            <person name="Rasko D.A."/>
            <person name="Paulsen I.T."/>
            <person name="Ren Q."/>
            <person name="Daugherty S.C."/>
            <person name="DeBoy R.T."/>
            <person name="Dodson R.J."/>
            <person name="Durkin A.S."/>
            <person name="Madupu R."/>
            <person name="Nelson W.C."/>
            <person name="Sullivan S.A."/>
            <person name="Rosovitz M.J."/>
            <person name="Haft D.H."/>
            <person name="Selengut J."/>
            <person name="Ward N."/>
        </authorList>
    </citation>
    <scope>NUCLEOTIDE SEQUENCE [LARGE SCALE GENOMIC DNA]</scope>
    <source>
        <strain>ATCC 700808 / DSM 15171 / DSS-3</strain>
    </source>
</reference>
<reference key="2">
    <citation type="journal article" date="2014" name="Stand. Genomic Sci.">
        <title>An updated genome annotation for the model marine bacterium Ruegeria pomeroyi DSS-3.</title>
        <authorList>
            <person name="Rivers A.R."/>
            <person name="Smith C.B."/>
            <person name="Moran M.A."/>
        </authorList>
    </citation>
    <scope>GENOME REANNOTATION</scope>
    <source>
        <strain>ATCC 700808 / DSM 15171 / DSS-3</strain>
    </source>
</reference>
<comment type="function">
    <text evidence="1">Catalyzes the ATP-dependent 2-thiolation of cytidine in position 32 of tRNA, to form 2-thiocytidine (s(2)C32). The sulfur atoms are provided by the cysteine/cysteine desulfurase (IscS) system.</text>
</comment>
<comment type="catalytic activity">
    <reaction evidence="1">
        <text>cytidine(32) in tRNA + S-sulfanyl-L-cysteinyl-[cysteine desulfurase] + AH2 + ATP = 2-thiocytidine(32) in tRNA + L-cysteinyl-[cysteine desulfurase] + A + AMP + diphosphate + H(+)</text>
        <dbReference type="Rhea" id="RHEA:57048"/>
        <dbReference type="Rhea" id="RHEA-COMP:10288"/>
        <dbReference type="Rhea" id="RHEA-COMP:12157"/>
        <dbReference type="Rhea" id="RHEA-COMP:12158"/>
        <dbReference type="Rhea" id="RHEA-COMP:14821"/>
        <dbReference type="ChEBI" id="CHEBI:13193"/>
        <dbReference type="ChEBI" id="CHEBI:15378"/>
        <dbReference type="ChEBI" id="CHEBI:17499"/>
        <dbReference type="ChEBI" id="CHEBI:29950"/>
        <dbReference type="ChEBI" id="CHEBI:30616"/>
        <dbReference type="ChEBI" id="CHEBI:33019"/>
        <dbReference type="ChEBI" id="CHEBI:61963"/>
        <dbReference type="ChEBI" id="CHEBI:82748"/>
        <dbReference type="ChEBI" id="CHEBI:141453"/>
        <dbReference type="ChEBI" id="CHEBI:456215"/>
    </reaction>
    <physiologicalReaction direction="left-to-right" evidence="1">
        <dbReference type="Rhea" id="RHEA:57049"/>
    </physiologicalReaction>
</comment>
<comment type="cofactor">
    <cofactor evidence="1">
        <name>Mg(2+)</name>
        <dbReference type="ChEBI" id="CHEBI:18420"/>
    </cofactor>
</comment>
<comment type="cofactor">
    <cofactor evidence="1">
        <name>[4Fe-4S] cluster</name>
        <dbReference type="ChEBI" id="CHEBI:49883"/>
    </cofactor>
    <text evidence="1">Binds 1 [4Fe-4S] cluster per subunit. The cluster is chelated by three Cys residues, the fourth Fe has a free coordination site that may bind a sulfur atom transferred from the persulfide of IscS.</text>
</comment>
<comment type="pathway">
    <text evidence="1">tRNA modification.</text>
</comment>
<comment type="subunit">
    <text evidence="1">Homodimer.</text>
</comment>
<comment type="subcellular location">
    <subcellularLocation>
        <location evidence="1">Cytoplasm</location>
    </subcellularLocation>
</comment>
<comment type="miscellaneous">
    <text evidence="1">The thiolation reaction likely consists of two steps: a first activation step by ATP to form an adenylated intermediate of the target base of tRNA, and a second nucleophilic substitution step of the sulfur (S) atom supplied by the hydrosulfide attached to the Fe-S cluster.</text>
</comment>
<comment type="similarity">
    <text evidence="1">Belongs to the TtcA family.</text>
</comment>
<dbReference type="EC" id="2.8.1.-" evidence="1"/>
<dbReference type="EMBL" id="CP000031">
    <property type="protein sequence ID" value="AAV93851.1"/>
    <property type="molecule type" value="Genomic_DNA"/>
</dbReference>
<dbReference type="RefSeq" id="WP_011046293.1">
    <property type="nucleotide sequence ID" value="NC_003911.12"/>
</dbReference>
<dbReference type="SMR" id="Q5LW09"/>
<dbReference type="STRING" id="246200.SPO0534"/>
<dbReference type="PaxDb" id="246200-SPO0534"/>
<dbReference type="DNASU" id="3195432"/>
<dbReference type="KEGG" id="sil:SPO0534"/>
<dbReference type="eggNOG" id="COG0037">
    <property type="taxonomic scope" value="Bacteria"/>
</dbReference>
<dbReference type="HOGENOM" id="CLU_026481_0_0_5"/>
<dbReference type="OrthoDB" id="9801054at2"/>
<dbReference type="Proteomes" id="UP000001023">
    <property type="component" value="Chromosome"/>
</dbReference>
<dbReference type="GO" id="GO:0005737">
    <property type="term" value="C:cytoplasm"/>
    <property type="evidence" value="ECO:0007669"/>
    <property type="project" value="UniProtKB-SubCell"/>
</dbReference>
<dbReference type="GO" id="GO:0051539">
    <property type="term" value="F:4 iron, 4 sulfur cluster binding"/>
    <property type="evidence" value="ECO:0007669"/>
    <property type="project" value="UniProtKB-UniRule"/>
</dbReference>
<dbReference type="GO" id="GO:0005524">
    <property type="term" value="F:ATP binding"/>
    <property type="evidence" value="ECO:0007669"/>
    <property type="project" value="UniProtKB-UniRule"/>
</dbReference>
<dbReference type="GO" id="GO:0000287">
    <property type="term" value="F:magnesium ion binding"/>
    <property type="evidence" value="ECO:0007669"/>
    <property type="project" value="UniProtKB-UniRule"/>
</dbReference>
<dbReference type="GO" id="GO:0016783">
    <property type="term" value="F:sulfurtransferase activity"/>
    <property type="evidence" value="ECO:0007669"/>
    <property type="project" value="UniProtKB-UniRule"/>
</dbReference>
<dbReference type="GO" id="GO:0000049">
    <property type="term" value="F:tRNA binding"/>
    <property type="evidence" value="ECO:0007669"/>
    <property type="project" value="UniProtKB-KW"/>
</dbReference>
<dbReference type="GO" id="GO:0034227">
    <property type="term" value="P:tRNA thio-modification"/>
    <property type="evidence" value="ECO:0007669"/>
    <property type="project" value="UniProtKB-UniRule"/>
</dbReference>
<dbReference type="CDD" id="cd24138">
    <property type="entry name" value="TtcA-like"/>
    <property type="match status" value="1"/>
</dbReference>
<dbReference type="Gene3D" id="3.40.50.620">
    <property type="entry name" value="HUPs"/>
    <property type="match status" value="1"/>
</dbReference>
<dbReference type="HAMAP" id="MF_01850">
    <property type="entry name" value="TtcA"/>
    <property type="match status" value="1"/>
</dbReference>
<dbReference type="InterPro" id="IPR014729">
    <property type="entry name" value="Rossmann-like_a/b/a_fold"/>
</dbReference>
<dbReference type="InterPro" id="IPR011063">
    <property type="entry name" value="TilS/TtcA_N"/>
</dbReference>
<dbReference type="InterPro" id="IPR012089">
    <property type="entry name" value="tRNA_Cyd_32_2_STrfase"/>
</dbReference>
<dbReference type="InterPro" id="IPR035107">
    <property type="entry name" value="tRNA_thiolation_TtcA_Ctu1"/>
</dbReference>
<dbReference type="NCBIfam" id="NF007972">
    <property type="entry name" value="PRK10696.1"/>
    <property type="match status" value="1"/>
</dbReference>
<dbReference type="PANTHER" id="PTHR43686:SF1">
    <property type="entry name" value="AMINOTRAN_5 DOMAIN-CONTAINING PROTEIN"/>
    <property type="match status" value="1"/>
</dbReference>
<dbReference type="PANTHER" id="PTHR43686">
    <property type="entry name" value="SULFURTRANSFERASE-RELATED"/>
    <property type="match status" value="1"/>
</dbReference>
<dbReference type="Pfam" id="PF01171">
    <property type="entry name" value="ATP_bind_3"/>
    <property type="match status" value="1"/>
</dbReference>
<dbReference type="PIRSF" id="PIRSF004976">
    <property type="entry name" value="ATPase_YdaO"/>
    <property type="match status" value="1"/>
</dbReference>
<dbReference type="SUPFAM" id="SSF52402">
    <property type="entry name" value="Adenine nucleotide alpha hydrolases-like"/>
    <property type="match status" value="1"/>
</dbReference>
<name>TTCA_RUEPO</name>